<name>G3P_BPI22</name>
<accession>P15415</accession>
<protein>
    <recommendedName>
        <fullName>Attachment protein G3P</fullName>
    </recommendedName>
    <alternativeName>
        <fullName>Gene 3 protein</fullName>
        <shortName>G3P</shortName>
    </alternativeName>
    <alternativeName>
        <fullName>Minor coat protein</fullName>
    </alternativeName>
</protein>
<evidence type="ECO:0000250" key="1">
    <source>
        <dbReference type="UniProtKB" id="O80297"/>
    </source>
</evidence>
<evidence type="ECO:0000250" key="2">
    <source>
        <dbReference type="UniProtKB" id="P03661"/>
    </source>
</evidence>
<evidence type="ECO:0000250" key="3">
    <source>
        <dbReference type="UniProtKB" id="P03663"/>
    </source>
</evidence>
<evidence type="ECO:0000255" key="4"/>
<evidence type="ECO:0000256" key="5">
    <source>
        <dbReference type="SAM" id="MobiDB-lite"/>
    </source>
</evidence>
<evidence type="ECO:0000305" key="6"/>
<keyword id="KW-0167">Capsid protein</keyword>
<keyword id="KW-1015">Disulfide bond</keyword>
<keyword id="KW-1043">Host membrane</keyword>
<keyword id="KW-0945">Host-virus interaction</keyword>
<keyword id="KW-0472">Membrane</keyword>
<keyword id="KW-1185">Reference proteome</keyword>
<keyword id="KW-0732">Signal</keyword>
<keyword id="KW-0812">Transmembrane</keyword>
<keyword id="KW-1133">Transmembrane helix</keyword>
<keyword id="KW-1233">Viral attachment to host adhesion receptor</keyword>
<keyword id="KW-1161">Viral attachment to host cell</keyword>
<keyword id="KW-1175">Viral attachment to host cell pilus</keyword>
<keyword id="KW-1234">Viral attachment to host entry receptor</keyword>
<keyword id="KW-1249">Viral extrusion</keyword>
<keyword id="KW-1162">Viral penetration into host cytoplasm</keyword>
<keyword id="KW-1241">Viral penetration into host cytoplasm via pilus retraction</keyword>
<keyword id="KW-1188">Viral release from host cell</keyword>
<keyword id="KW-0946">Virion</keyword>
<keyword id="KW-1160">Virus entry into host cell</keyword>
<dbReference type="EMBL" id="X14336">
    <property type="protein sequence ID" value="CAA32518.1"/>
    <property type="molecule type" value="Genomic_DNA"/>
</dbReference>
<dbReference type="PIR" id="S08091">
    <property type="entry name" value="S08091"/>
</dbReference>
<dbReference type="RefSeq" id="NP_039621.1">
    <property type="nucleotide sequence ID" value="NC_001332.1"/>
</dbReference>
<dbReference type="SMR" id="P15415"/>
<dbReference type="GeneID" id="1260723"/>
<dbReference type="KEGG" id="vg:1260723"/>
<dbReference type="OrthoDB" id="29620at10239"/>
<dbReference type="Proteomes" id="UP000000373">
    <property type="component" value="Genome"/>
</dbReference>
<dbReference type="GO" id="GO:0033644">
    <property type="term" value="C:host cell membrane"/>
    <property type="evidence" value="ECO:0007669"/>
    <property type="project" value="UniProtKB-SubCell"/>
</dbReference>
<dbReference type="GO" id="GO:0016020">
    <property type="term" value="C:membrane"/>
    <property type="evidence" value="ECO:0007669"/>
    <property type="project" value="UniProtKB-KW"/>
</dbReference>
<dbReference type="GO" id="GO:0019028">
    <property type="term" value="C:viral capsid"/>
    <property type="evidence" value="ECO:0007669"/>
    <property type="project" value="UniProtKB-KW"/>
</dbReference>
<dbReference type="GO" id="GO:0098671">
    <property type="term" value="P:adhesion receptor-mediated virion attachment to host cell"/>
    <property type="evidence" value="ECO:0007669"/>
    <property type="project" value="UniProtKB-KW"/>
</dbReference>
<dbReference type="GO" id="GO:0098670">
    <property type="term" value="P:entry receptor-mediated virion attachment to host cell"/>
    <property type="evidence" value="ECO:0007669"/>
    <property type="project" value="UniProtKB-KW"/>
</dbReference>
<dbReference type="GO" id="GO:0099045">
    <property type="term" value="P:viral extrusion"/>
    <property type="evidence" value="ECO:0007669"/>
    <property type="project" value="UniProtKB-KW"/>
</dbReference>
<dbReference type="GO" id="GO:0039666">
    <property type="term" value="P:virion attachment to host cell pilus"/>
    <property type="evidence" value="ECO:0007669"/>
    <property type="project" value="UniProtKB-KW"/>
</dbReference>
<dbReference type="Gene3D" id="3.30.110.160">
    <property type="match status" value="1"/>
</dbReference>
<dbReference type="Gene3D" id="2.30.27.10">
    <property type="entry name" value="Phage FD Coat Protein,Membrane penetration domain"/>
    <property type="match status" value="1"/>
</dbReference>
<dbReference type="InterPro" id="IPR008021">
    <property type="entry name" value="Attachment_G3P_N"/>
</dbReference>
<dbReference type="InterPro" id="IPR036200">
    <property type="entry name" value="Attachment_G3P_N_sf"/>
</dbReference>
<dbReference type="Pfam" id="PF21443">
    <property type="entry name" value="G3P_pilus-bind"/>
    <property type="match status" value="1"/>
</dbReference>
<dbReference type="Pfam" id="PF05357">
    <property type="entry name" value="Phage_Coat_A"/>
    <property type="match status" value="1"/>
</dbReference>
<dbReference type="SUPFAM" id="SSF50176">
    <property type="entry name" value="N-terminal domains of the minor coat protein g3p"/>
    <property type="match status" value="1"/>
</dbReference>
<comment type="function">
    <text evidence="1 2">Plays essential roles both in the penetration of the viral genome into the bacterial host via pilus retraction and in the extrusion process (By similarity). During the initial step of infection, G3P mediates adsorption of the phage to its primary receptor, the tip of host I-pilus (By similarity). Attachment of the phage causes pilus retraction bringing the viral particle into close proximity of the host cell inner membrane (By similarity). Subsequent interaction with the host entry receptor tolA induces penetration of the viral DNA into the host cytoplasm (By similarity). In the extrusion process, G3P mediates the release of the membrane-anchored virion from the cell via its C-terminal domain (By similarity).</text>
</comment>
<comment type="subunit">
    <text evidence="2">Interacts with G6P; this interaction is required for proper integration of G3P and G6P into the virion (By similarity). Interacts with G8P. Interacts with the tip of the host pilus. Interacts (via N-terminus) with host TolA (By similarity).</text>
</comment>
<comment type="subcellular location">
    <subcellularLocation>
        <location evidence="6">Virion</location>
    </subcellularLocation>
    <subcellularLocation>
        <location evidence="6">Host membrane</location>
        <topology evidence="6">Single-pass type I membrane protein</topology>
    </subcellularLocation>
    <text>Prior to assembly, G3P is found associated with the bacterial host inner membrane. There are about five copies of this protein per mature phage that are located on the head side of the filamentous virion.</text>
</comment>
<comment type="domain">
    <text evidence="1 2">Consists of 3 domains (N1/D1, N2/D2, and CT), a glycine-rich repeats and a C-terminal transmembrane segment (By similarity). The N2 domain interacts with the I pilus, whereas the N1 domain forms a complex with the C-terminal domain of tolA (By similarity).</text>
</comment>
<comment type="similarity">
    <text evidence="6">Belongs to the inovirus G3P protein family.</text>
</comment>
<reference key="1">
    <citation type="journal article" date="1992" name="J. Mol. Evol.">
        <title>Nucleotide sequence of the genome of the filamentous bacteriophage I2-2: module evolution of the filamentous phage genome.</title>
        <authorList>
            <person name="Stassen A.P."/>
            <person name="Schonmakers E.F."/>
            <person name="Yu M."/>
            <person name="Schoenmakers J.G."/>
            <person name="Konings R.N.H."/>
        </authorList>
    </citation>
    <scope>NUCLEOTIDE SEQUENCE [GENOMIC DNA]</scope>
</reference>
<feature type="signal peptide" evidence="4">
    <location>
        <begin position="1"/>
        <end position="19"/>
    </location>
</feature>
<feature type="chain" id="PRO_0000003290" description="Attachment protein G3P">
    <location>
        <begin position="20"/>
        <end position="434"/>
    </location>
</feature>
<feature type="transmembrane region" description="Helical" evidence="4">
    <location>
        <begin position="408"/>
        <end position="429"/>
    </location>
</feature>
<feature type="region of interest" description="N1" evidence="2">
    <location>
        <begin position="19"/>
        <end position="88"/>
    </location>
</feature>
<feature type="region of interest" description="G1 (Gly-rich linker)" evidence="2">
    <location>
        <begin position="89"/>
        <end position="107"/>
    </location>
</feature>
<feature type="region of interest" description="Disordered" evidence="5">
    <location>
        <begin position="118"/>
        <end position="137"/>
    </location>
</feature>
<feature type="region of interest" description="N2" evidence="3">
    <location>
        <begin position="132"/>
        <end position="200"/>
    </location>
</feature>
<feature type="region of interest" description="Disordered" evidence="5">
    <location>
        <begin position="191"/>
        <end position="260"/>
    </location>
</feature>
<feature type="region of interest" description="CT" evidence="2">
    <location>
        <begin position="252"/>
        <end position="434"/>
    </location>
</feature>
<feature type="region of interest" description="Disordered" evidence="5">
    <location>
        <begin position="272"/>
        <end position="311"/>
    </location>
</feature>
<feature type="compositionally biased region" description="Acidic residues" evidence="5">
    <location>
        <begin position="127"/>
        <end position="137"/>
    </location>
</feature>
<feature type="compositionally biased region" description="Low complexity" evidence="5">
    <location>
        <begin position="193"/>
        <end position="206"/>
    </location>
</feature>
<feature type="compositionally biased region" description="Gly residues" evidence="5">
    <location>
        <begin position="211"/>
        <end position="257"/>
    </location>
</feature>
<feature type="compositionally biased region" description="Basic and acidic residues" evidence="5">
    <location>
        <begin position="293"/>
        <end position="302"/>
    </location>
</feature>
<feature type="disulfide bond" evidence="3">
    <location>
        <begin position="63"/>
        <end position="98"/>
    </location>
</feature>
<feature type="disulfide bond" evidence="3">
    <location>
        <begin position="139"/>
        <end position="167"/>
    </location>
</feature>
<feature type="disulfide bond" evidence="3">
    <location>
        <begin position="177"/>
        <end position="184"/>
    </location>
</feature>
<sequence length="434" mass="45426">MKRKIIAISLFLYIPLSNADNWESITKSYYTGFAMSKTVESKDQDGKTVRKEVITQADLTTACNDAKASAQDVFNQMKLTFSGIWPDSQFRLVTGDTCVYNGSPSEKTESWSIRAQVEGDMQRSVPDEEPSEQTPEEICEAKPPIDGVFNNVSKGDEGGFYINYNGCEYEATGVTVCQNDGTVCASSAWKPTGYVPESGESSSSPVKDGDTGGTGEGGSDTGGDTGGGDTGGGSTGGDTGGSTGGGSTGGGSTGGSTGKSLTKEDVTAAIHDASPSIGDAVKDSLTEDNDQNDNQKKADEQSAKASASVSDAISDGMRGVGNFVDDLGGESSQYGIGNSEMDLSVSLAKGQLGIDLEGHGSAWESFLNDGALRPSIPSGHGCTDFVMFQGSVYQLDIGCDKLGDIKSVLSWVMYCLTFWYVFQSATSLLRKGEQ</sequence>
<proteinExistence type="inferred from homology"/>
<organismHost>
    <name type="scientific">Escherichia coli</name>
    <dbReference type="NCBI Taxonomy" id="562"/>
</organismHost>
<organism>
    <name type="scientific">Enterobacteria phage I2-2</name>
    <name type="common">Bacteriophage I2-2</name>
    <dbReference type="NCBI Taxonomy" id="10869"/>
    <lineage>
        <taxon>Viruses</taxon>
        <taxon>Monodnaviria</taxon>
        <taxon>Loebvirae</taxon>
        <taxon>Hofneiviricota</taxon>
        <taxon>Faserviricetes</taxon>
        <taxon>Tubulavirales</taxon>
        <taxon>Inoviridae</taxon>
        <taxon>Lineavirus</taxon>
    </lineage>
</organism>
<gene>
    <name type="primary">III</name>
</gene>